<accession>Q8TS34</accession>
<gene>
    <name evidence="1" type="primary">katG</name>
    <name type="ordered locus">MA_0972</name>
</gene>
<reference key="1">
    <citation type="journal article" date="2002" name="Genome Res.">
        <title>The genome of Methanosarcina acetivorans reveals extensive metabolic and physiological diversity.</title>
        <authorList>
            <person name="Galagan J.E."/>
            <person name="Nusbaum C."/>
            <person name="Roy A."/>
            <person name="Endrizzi M.G."/>
            <person name="Macdonald P."/>
            <person name="FitzHugh W."/>
            <person name="Calvo S."/>
            <person name="Engels R."/>
            <person name="Smirnov S."/>
            <person name="Atnoor D."/>
            <person name="Brown A."/>
            <person name="Allen N."/>
            <person name="Naylor J."/>
            <person name="Stange-Thomann N."/>
            <person name="DeArellano K."/>
            <person name="Johnson R."/>
            <person name="Linton L."/>
            <person name="McEwan P."/>
            <person name="McKernan K."/>
            <person name="Talamas J."/>
            <person name="Tirrell A."/>
            <person name="Ye W."/>
            <person name="Zimmer A."/>
            <person name="Barber R.D."/>
            <person name="Cann I."/>
            <person name="Graham D.E."/>
            <person name="Grahame D.A."/>
            <person name="Guss A.M."/>
            <person name="Hedderich R."/>
            <person name="Ingram-Smith C."/>
            <person name="Kuettner H.C."/>
            <person name="Krzycki J.A."/>
            <person name="Leigh J.A."/>
            <person name="Li W."/>
            <person name="Liu J."/>
            <person name="Mukhopadhyay B."/>
            <person name="Reeve J.N."/>
            <person name="Smith K."/>
            <person name="Springer T.A."/>
            <person name="Umayam L.A."/>
            <person name="White O."/>
            <person name="White R.H."/>
            <person name="de Macario E.C."/>
            <person name="Ferry J.G."/>
            <person name="Jarrell K.F."/>
            <person name="Jing H."/>
            <person name="Macario A.J.L."/>
            <person name="Paulsen I.T."/>
            <person name="Pritchett M."/>
            <person name="Sowers K.R."/>
            <person name="Swanson R.V."/>
            <person name="Zinder S.H."/>
            <person name="Lander E."/>
            <person name="Metcalf W.W."/>
            <person name="Birren B."/>
        </authorList>
    </citation>
    <scope>NUCLEOTIDE SEQUENCE [LARGE SCALE GENOMIC DNA]</scope>
    <source>
        <strain>ATCC 35395 / DSM 2834 / JCM 12185 / C2A</strain>
    </source>
</reference>
<keyword id="KW-0349">Heme</keyword>
<keyword id="KW-0376">Hydrogen peroxide</keyword>
<keyword id="KW-0408">Iron</keyword>
<keyword id="KW-0479">Metal-binding</keyword>
<keyword id="KW-0560">Oxidoreductase</keyword>
<keyword id="KW-0575">Peroxidase</keyword>
<keyword id="KW-1185">Reference proteome</keyword>
<feature type="chain" id="PRO_0000354968" description="Catalase-peroxidase">
    <location>
        <begin position="1"/>
        <end position="736"/>
    </location>
</feature>
<feature type="region of interest" description="Disordered" evidence="2">
    <location>
        <begin position="1"/>
        <end position="30"/>
    </location>
</feature>
<feature type="region of interest" description="Disordered" evidence="2">
    <location>
        <begin position="351"/>
        <end position="373"/>
    </location>
</feature>
<feature type="compositionally biased region" description="Polar residues" evidence="2">
    <location>
        <begin position="12"/>
        <end position="21"/>
    </location>
</feature>
<feature type="active site" description="Proton acceptor" evidence="1">
    <location>
        <position position="102"/>
    </location>
</feature>
<feature type="binding site" description="axial binding residue" evidence="1">
    <location>
        <position position="265"/>
    </location>
    <ligand>
        <name>heme b</name>
        <dbReference type="ChEBI" id="CHEBI:60344"/>
    </ligand>
    <ligandPart>
        <name>Fe</name>
        <dbReference type="ChEBI" id="CHEBI:18248"/>
    </ligandPart>
</feature>
<feature type="site" description="Transition state stabilizer" evidence="1">
    <location>
        <position position="98"/>
    </location>
</feature>
<feature type="cross-link" description="Tryptophyl-tyrosyl-methioninium (Trp-Tyr) (with M-250)" evidence="1">
    <location>
        <begin position="101"/>
        <end position="224"/>
    </location>
</feature>
<feature type="cross-link" description="Tryptophyl-tyrosyl-methioninium (Tyr-Met) (with W-101)" evidence="1">
    <location>
        <begin position="224"/>
        <end position="250"/>
    </location>
</feature>
<dbReference type="EC" id="1.11.1.21" evidence="1"/>
<dbReference type="EMBL" id="AE010299">
    <property type="protein sequence ID" value="AAM04404.1"/>
    <property type="molecule type" value="Genomic_DNA"/>
</dbReference>
<dbReference type="SMR" id="Q8TS34"/>
<dbReference type="STRING" id="188937.MA_0972"/>
<dbReference type="PeroxiBase" id="2324">
    <property type="entry name" value="MacCP01_C2A"/>
</dbReference>
<dbReference type="EnsemblBacteria" id="AAM04404">
    <property type="protein sequence ID" value="AAM04404"/>
    <property type="gene ID" value="MA_0972"/>
</dbReference>
<dbReference type="KEGG" id="mac:MA_0972"/>
<dbReference type="HOGENOM" id="CLU_025424_2_0_2"/>
<dbReference type="InParanoid" id="Q8TS34"/>
<dbReference type="PhylomeDB" id="Q8TS34"/>
<dbReference type="Proteomes" id="UP000002487">
    <property type="component" value="Chromosome"/>
</dbReference>
<dbReference type="GO" id="GO:0005829">
    <property type="term" value="C:cytosol"/>
    <property type="evidence" value="ECO:0000318"/>
    <property type="project" value="GO_Central"/>
</dbReference>
<dbReference type="GO" id="GO:0004096">
    <property type="term" value="F:catalase activity"/>
    <property type="evidence" value="ECO:0000318"/>
    <property type="project" value="GO_Central"/>
</dbReference>
<dbReference type="GO" id="GO:0020037">
    <property type="term" value="F:heme binding"/>
    <property type="evidence" value="ECO:0000318"/>
    <property type="project" value="GO_Central"/>
</dbReference>
<dbReference type="GO" id="GO:0046872">
    <property type="term" value="F:metal ion binding"/>
    <property type="evidence" value="ECO:0007669"/>
    <property type="project" value="UniProtKB-KW"/>
</dbReference>
<dbReference type="GO" id="GO:0070301">
    <property type="term" value="P:cellular response to hydrogen peroxide"/>
    <property type="evidence" value="ECO:0000318"/>
    <property type="project" value="GO_Central"/>
</dbReference>
<dbReference type="GO" id="GO:0042744">
    <property type="term" value="P:hydrogen peroxide catabolic process"/>
    <property type="evidence" value="ECO:0000318"/>
    <property type="project" value="GO_Central"/>
</dbReference>
<dbReference type="CDD" id="cd00649">
    <property type="entry name" value="catalase_peroxidase_1"/>
    <property type="match status" value="1"/>
</dbReference>
<dbReference type="CDD" id="cd08200">
    <property type="entry name" value="catalase_peroxidase_2"/>
    <property type="match status" value="1"/>
</dbReference>
<dbReference type="FunFam" id="1.10.420.10:FF:000002">
    <property type="entry name" value="Catalase-peroxidase"/>
    <property type="match status" value="1"/>
</dbReference>
<dbReference type="FunFam" id="1.10.420.10:FF:000004">
    <property type="entry name" value="Catalase-peroxidase"/>
    <property type="match status" value="1"/>
</dbReference>
<dbReference type="FunFam" id="1.10.520.10:FF:000002">
    <property type="entry name" value="Catalase-peroxidase"/>
    <property type="match status" value="1"/>
</dbReference>
<dbReference type="FunFam" id="1.10.520.10:FF:000004">
    <property type="entry name" value="Catalase-peroxidase"/>
    <property type="match status" value="1"/>
</dbReference>
<dbReference type="Gene3D" id="1.10.520.10">
    <property type="match status" value="2"/>
</dbReference>
<dbReference type="Gene3D" id="1.10.420.10">
    <property type="entry name" value="Peroxidase, domain 2"/>
    <property type="match status" value="2"/>
</dbReference>
<dbReference type="HAMAP" id="MF_01961">
    <property type="entry name" value="Catal_peroxid"/>
    <property type="match status" value="1"/>
</dbReference>
<dbReference type="InterPro" id="IPR000763">
    <property type="entry name" value="Catalase_peroxidase"/>
</dbReference>
<dbReference type="InterPro" id="IPR002016">
    <property type="entry name" value="Haem_peroxidase"/>
</dbReference>
<dbReference type="InterPro" id="IPR010255">
    <property type="entry name" value="Haem_peroxidase_sf"/>
</dbReference>
<dbReference type="InterPro" id="IPR019794">
    <property type="entry name" value="Peroxidases_AS"/>
</dbReference>
<dbReference type="InterPro" id="IPR019793">
    <property type="entry name" value="Peroxidases_heam-ligand_BS"/>
</dbReference>
<dbReference type="NCBIfam" id="TIGR00198">
    <property type="entry name" value="cat_per_HPI"/>
    <property type="match status" value="1"/>
</dbReference>
<dbReference type="NCBIfam" id="NF011635">
    <property type="entry name" value="PRK15061.1"/>
    <property type="match status" value="1"/>
</dbReference>
<dbReference type="PANTHER" id="PTHR30555:SF0">
    <property type="entry name" value="CATALASE-PEROXIDASE"/>
    <property type="match status" value="1"/>
</dbReference>
<dbReference type="PANTHER" id="PTHR30555">
    <property type="entry name" value="HYDROPEROXIDASE I, BIFUNCTIONAL CATALASE-PEROXIDASE"/>
    <property type="match status" value="1"/>
</dbReference>
<dbReference type="Pfam" id="PF00141">
    <property type="entry name" value="peroxidase"/>
    <property type="match status" value="2"/>
</dbReference>
<dbReference type="PRINTS" id="PR00460">
    <property type="entry name" value="BPEROXIDASE"/>
</dbReference>
<dbReference type="PRINTS" id="PR00458">
    <property type="entry name" value="PEROXIDASE"/>
</dbReference>
<dbReference type="SUPFAM" id="SSF48113">
    <property type="entry name" value="Heme-dependent peroxidases"/>
    <property type="match status" value="2"/>
</dbReference>
<dbReference type="PROSITE" id="PS00435">
    <property type="entry name" value="PEROXIDASE_1"/>
    <property type="match status" value="1"/>
</dbReference>
<dbReference type="PROSITE" id="PS00436">
    <property type="entry name" value="PEROXIDASE_2"/>
    <property type="match status" value="1"/>
</dbReference>
<dbReference type="PROSITE" id="PS50873">
    <property type="entry name" value="PEROXIDASE_4"/>
    <property type="match status" value="1"/>
</dbReference>
<sequence length="736" mass="81051">MGGNVMTDDKMNSVTSGANKQETGRDMSNRDWWPNHLKLEILHQHSSKSNPMGEDFNYAKEFKSLDLAAVKKDLAALMTDSQDWWPADFGHYGPLFIRMAWHSAGTYRAGDGRGGGGRGQQRFAPLNSWPDNVNLDKARRLLWPIKQKYGRKISWADLMILTGNVAMETMGFKTFGFGGGREDVWEPDQDVYWGSEDTWLGDERYTGDRDLENPLAAVQMGLIYVNPEGPNGNPDPIAAAKDIREVFARMAMNDEETVALIAGGHAFGKTHGAGPASHVGPEPEAASIEAQGLGWKSSFGTGKGDDTITGGLEVTWTNTPTKWSNNFFRILFGYEWELTKSPAGAYQWKPKGGAGAGTIPDAHDPSKRHAPSMMTTDLSLRFDPVYEKISRHFYENPGQLADSFARAWFKLTHRDMGPRARYLGPEVPAEELIWQDPIPAVNHELIDEKDIAFLKDRILASGLSISQLVSTAWVSASTFRGSDKRGGANGARIRLAPQKDWEVNQPAELAKVLNTLEGIQSEFNSAASGGKKVSLADLIVLAGCAGVEQAAKNAGYDVTVPFLPGRMDALQEQTDVVSFALLEPIADGFRNYLKAQYPLPAEELLVDKAQLLTLTAPEMTVLVGGMRVLNTNFGHTQHGVFTQKPEALTNDFFVNLLDMGTEWKAVSDVKDIFEGCDRKTGEVKWTGTRVDLIFGSNSQLRALAEVYGSADAQEKFVQDFVAAWTKVMNLDRFDLA</sequence>
<evidence type="ECO:0000255" key="1">
    <source>
        <dbReference type="HAMAP-Rule" id="MF_01961"/>
    </source>
</evidence>
<evidence type="ECO:0000256" key="2">
    <source>
        <dbReference type="SAM" id="MobiDB-lite"/>
    </source>
</evidence>
<name>KATG_METAC</name>
<protein>
    <recommendedName>
        <fullName evidence="1">Catalase-peroxidase</fullName>
        <shortName evidence="1">CP</shortName>
        <ecNumber evidence="1">1.11.1.21</ecNumber>
    </recommendedName>
    <alternativeName>
        <fullName evidence="1">Peroxidase/catalase</fullName>
    </alternativeName>
</protein>
<comment type="function">
    <text evidence="1">Bifunctional enzyme with both catalase and broad-spectrum peroxidase activity.</text>
</comment>
<comment type="catalytic activity">
    <reaction evidence="1">
        <text>H2O2 + AH2 = A + 2 H2O</text>
        <dbReference type="Rhea" id="RHEA:30275"/>
        <dbReference type="ChEBI" id="CHEBI:13193"/>
        <dbReference type="ChEBI" id="CHEBI:15377"/>
        <dbReference type="ChEBI" id="CHEBI:16240"/>
        <dbReference type="ChEBI" id="CHEBI:17499"/>
        <dbReference type="EC" id="1.11.1.21"/>
    </reaction>
</comment>
<comment type="catalytic activity">
    <reaction evidence="1">
        <text>2 H2O2 = O2 + 2 H2O</text>
        <dbReference type="Rhea" id="RHEA:20309"/>
        <dbReference type="ChEBI" id="CHEBI:15377"/>
        <dbReference type="ChEBI" id="CHEBI:15379"/>
        <dbReference type="ChEBI" id="CHEBI:16240"/>
        <dbReference type="EC" id="1.11.1.21"/>
    </reaction>
</comment>
<comment type="cofactor">
    <cofactor evidence="1">
        <name>heme b</name>
        <dbReference type="ChEBI" id="CHEBI:60344"/>
    </cofactor>
    <text evidence="1">Binds 1 heme b (iron(II)-protoporphyrin IX) group per dimer.</text>
</comment>
<comment type="subunit">
    <text evidence="1">Homodimer or homotetramer.</text>
</comment>
<comment type="PTM">
    <text evidence="1">Formation of the three residue Trp-Tyr-Met cross-link is important for the catalase, but not the peroxidase activity of the enzyme.</text>
</comment>
<comment type="similarity">
    <text evidence="1">Belongs to the peroxidase family. Peroxidase/catalase subfamily.</text>
</comment>
<proteinExistence type="inferred from homology"/>
<organism>
    <name type="scientific">Methanosarcina acetivorans (strain ATCC 35395 / DSM 2834 / JCM 12185 / C2A)</name>
    <dbReference type="NCBI Taxonomy" id="188937"/>
    <lineage>
        <taxon>Archaea</taxon>
        <taxon>Methanobacteriati</taxon>
        <taxon>Methanobacteriota</taxon>
        <taxon>Stenosarchaea group</taxon>
        <taxon>Methanomicrobia</taxon>
        <taxon>Methanosarcinales</taxon>
        <taxon>Methanosarcinaceae</taxon>
        <taxon>Methanosarcina</taxon>
    </lineage>
</organism>